<accession>P16247</accession>
<comment type="catalytic activity">
    <reaction>
        <text>D-erythro-1-(imidazol-4-yl)glycerol 3-phosphate = 3-(imidazol-4-yl)-2-oxopropyl phosphate + H2O</text>
        <dbReference type="Rhea" id="RHEA:11040"/>
        <dbReference type="ChEBI" id="CHEBI:15377"/>
        <dbReference type="ChEBI" id="CHEBI:57766"/>
        <dbReference type="ChEBI" id="CHEBI:58278"/>
        <dbReference type="EC" id="4.2.1.19"/>
    </reaction>
</comment>
<comment type="pathway">
    <text>Amino-acid biosynthesis; L-histidine biosynthesis; L-histidine from 5-phospho-alpha-D-ribose 1-diphosphate: step 6/9.</text>
</comment>
<comment type="subcellular location">
    <subcellularLocation>
        <location evidence="1">Cytoplasm</location>
    </subcellularLocation>
</comment>
<comment type="similarity">
    <text evidence="2">Belongs to the imidazoleglycerol-phosphate dehydratase family.</text>
</comment>
<protein>
    <recommendedName>
        <fullName>Imidazoleglycerol-phosphate dehydratase</fullName>
        <shortName>IGPD</shortName>
        <ecNumber>4.2.1.19</ecNumber>
    </recommendedName>
</protein>
<proteinExistence type="inferred from homology"/>
<dbReference type="EC" id="4.2.1.19"/>
<dbReference type="EMBL" id="M31628">
    <property type="protein sequence ID" value="AAA26757.1"/>
    <property type="molecule type" value="Genomic_DNA"/>
</dbReference>
<dbReference type="EMBL" id="AL939111">
    <property type="protein sequence ID" value="CAB51444.1"/>
    <property type="molecule type" value="Genomic_DNA"/>
</dbReference>
<dbReference type="PIR" id="JQ0638">
    <property type="entry name" value="JQ0638"/>
</dbReference>
<dbReference type="RefSeq" id="NP_626312.1">
    <property type="nucleotide sequence ID" value="NC_003888.3"/>
</dbReference>
<dbReference type="RefSeq" id="WP_003976763.1">
    <property type="nucleotide sequence ID" value="NZ_VNID01000001.1"/>
</dbReference>
<dbReference type="SMR" id="P16247"/>
<dbReference type="FunCoup" id="P16247">
    <property type="interactions" value="217"/>
</dbReference>
<dbReference type="STRING" id="100226.gene:17759650"/>
<dbReference type="PaxDb" id="100226-SCO2052"/>
<dbReference type="GeneID" id="96651095"/>
<dbReference type="KEGG" id="sco:SCO2052"/>
<dbReference type="PATRIC" id="fig|100226.15.peg.2084"/>
<dbReference type="eggNOG" id="COG0131">
    <property type="taxonomic scope" value="Bacteria"/>
</dbReference>
<dbReference type="HOGENOM" id="CLU_044308_3_0_11"/>
<dbReference type="InParanoid" id="P16247"/>
<dbReference type="OrthoDB" id="9790411at2"/>
<dbReference type="PhylomeDB" id="P16247"/>
<dbReference type="UniPathway" id="UPA00031">
    <property type="reaction ID" value="UER00011"/>
</dbReference>
<dbReference type="Proteomes" id="UP000001973">
    <property type="component" value="Chromosome"/>
</dbReference>
<dbReference type="GO" id="GO:0005737">
    <property type="term" value="C:cytoplasm"/>
    <property type="evidence" value="ECO:0007669"/>
    <property type="project" value="UniProtKB-SubCell"/>
</dbReference>
<dbReference type="GO" id="GO:0004424">
    <property type="term" value="F:imidazoleglycerol-phosphate dehydratase activity"/>
    <property type="evidence" value="ECO:0000318"/>
    <property type="project" value="GO_Central"/>
</dbReference>
<dbReference type="GO" id="GO:0000105">
    <property type="term" value="P:L-histidine biosynthetic process"/>
    <property type="evidence" value="ECO:0000318"/>
    <property type="project" value="GO_Central"/>
</dbReference>
<dbReference type="CDD" id="cd07914">
    <property type="entry name" value="IGPD"/>
    <property type="match status" value="1"/>
</dbReference>
<dbReference type="FunFam" id="3.30.230.40:FF:000001">
    <property type="entry name" value="Imidazoleglycerol-phosphate dehydratase HisB"/>
    <property type="match status" value="1"/>
</dbReference>
<dbReference type="FunFam" id="3.30.230.40:FF:000003">
    <property type="entry name" value="Imidazoleglycerol-phosphate dehydratase HisB"/>
    <property type="match status" value="1"/>
</dbReference>
<dbReference type="Gene3D" id="3.30.230.40">
    <property type="entry name" value="Imidazole glycerol phosphate dehydratase, domain 1"/>
    <property type="match status" value="2"/>
</dbReference>
<dbReference type="HAMAP" id="MF_00076">
    <property type="entry name" value="HisB"/>
    <property type="match status" value="1"/>
</dbReference>
<dbReference type="InterPro" id="IPR038494">
    <property type="entry name" value="IGPD_sf"/>
</dbReference>
<dbReference type="InterPro" id="IPR000807">
    <property type="entry name" value="ImidazoleglycerolP_deHydtase"/>
</dbReference>
<dbReference type="InterPro" id="IPR020565">
    <property type="entry name" value="ImidazoleglycerP_deHydtase_CS"/>
</dbReference>
<dbReference type="InterPro" id="IPR020568">
    <property type="entry name" value="Ribosomal_Su5_D2-typ_SF"/>
</dbReference>
<dbReference type="NCBIfam" id="NF002110">
    <property type="entry name" value="PRK00951.1-6"/>
    <property type="match status" value="1"/>
</dbReference>
<dbReference type="NCBIfam" id="NF002111">
    <property type="entry name" value="PRK00951.2-1"/>
    <property type="match status" value="1"/>
</dbReference>
<dbReference type="NCBIfam" id="NF002114">
    <property type="entry name" value="PRK00951.2-4"/>
    <property type="match status" value="1"/>
</dbReference>
<dbReference type="PANTHER" id="PTHR23133:SF2">
    <property type="entry name" value="IMIDAZOLEGLYCEROL-PHOSPHATE DEHYDRATASE"/>
    <property type="match status" value="1"/>
</dbReference>
<dbReference type="PANTHER" id="PTHR23133">
    <property type="entry name" value="IMIDAZOLEGLYCEROL-PHOSPHATE DEHYDRATASE HIS7"/>
    <property type="match status" value="1"/>
</dbReference>
<dbReference type="Pfam" id="PF00475">
    <property type="entry name" value="IGPD"/>
    <property type="match status" value="1"/>
</dbReference>
<dbReference type="SUPFAM" id="SSF54211">
    <property type="entry name" value="Ribosomal protein S5 domain 2-like"/>
    <property type="match status" value="2"/>
</dbReference>
<dbReference type="PROSITE" id="PS00954">
    <property type="entry name" value="IGP_DEHYDRATASE_1"/>
    <property type="match status" value="1"/>
</dbReference>
<dbReference type="PROSITE" id="PS00955">
    <property type="entry name" value="IGP_DEHYDRATASE_2"/>
    <property type="match status" value="1"/>
</dbReference>
<evidence type="ECO:0000250" key="1"/>
<evidence type="ECO:0000305" key="2"/>
<sequence>MSRVGRVERTTKETSVLVEIDLDGTGKTDIATGVGFYDHMLDQLGRHGLFDLTVKTDGDLHIDSHHTIEDTALALGAAFRQALGDKVGIYRFGNCTVPLDESLAQVTVDLSGRPYLVHTEPENMAPMIGEYDVTMTRHILESFVAQAQVALHVHVPYGRNAHHIVECQFKALARALRYASERDPRAAGILPSTKGAL</sequence>
<keyword id="KW-0028">Amino-acid biosynthesis</keyword>
<keyword id="KW-0963">Cytoplasm</keyword>
<keyword id="KW-0368">Histidine biosynthesis</keyword>
<keyword id="KW-0456">Lyase</keyword>
<keyword id="KW-1185">Reference proteome</keyword>
<organism>
    <name type="scientific">Streptomyces coelicolor (strain ATCC BAA-471 / A3(2) / M145)</name>
    <dbReference type="NCBI Taxonomy" id="100226"/>
    <lineage>
        <taxon>Bacteria</taxon>
        <taxon>Bacillati</taxon>
        <taxon>Actinomycetota</taxon>
        <taxon>Actinomycetes</taxon>
        <taxon>Kitasatosporales</taxon>
        <taxon>Streptomycetaceae</taxon>
        <taxon>Streptomyces</taxon>
        <taxon>Streptomyces albidoflavus group</taxon>
    </lineage>
</organism>
<name>HIS7_STRCO</name>
<feature type="chain" id="PRO_0000158174" description="Imidazoleglycerol-phosphate dehydratase">
    <location>
        <begin position="1"/>
        <end position="197"/>
    </location>
</feature>
<reference key="1">
    <citation type="journal article" date="1990" name="Gene">
        <title>Cloning and characterization of the histidine biosynthetic gene cluster of Streptomyces coelicolor A3(2).</title>
        <authorList>
            <person name="Limauro D."/>
            <person name="Avitabile A."/>
            <person name="Cappellano M."/>
            <person name="Puglia A.M."/>
            <person name="Bruni C.B."/>
        </authorList>
    </citation>
    <scope>NUCLEOTIDE SEQUENCE [GENOMIC DNA]</scope>
    <source>
        <strain>A3(2) / NRRL B-16638</strain>
    </source>
</reference>
<reference key="2">
    <citation type="journal article" date="2002" name="Nature">
        <title>Complete genome sequence of the model actinomycete Streptomyces coelicolor A3(2).</title>
        <authorList>
            <person name="Bentley S.D."/>
            <person name="Chater K.F."/>
            <person name="Cerdeno-Tarraga A.-M."/>
            <person name="Challis G.L."/>
            <person name="Thomson N.R."/>
            <person name="James K.D."/>
            <person name="Harris D.E."/>
            <person name="Quail M.A."/>
            <person name="Kieser H."/>
            <person name="Harper D."/>
            <person name="Bateman A."/>
            <person name="Brown S."/>
            <person name="Chandra G."/>
            <person name="Chen C.W."/>
            <person name="Collins M."/>
            <person name="Cronin A."/>
            <person name="Fraser A."/>
            <person name="Goble A."/>
            <person name="Hidalgo J."/>
            <person name="Hornsby T."/>
            <person name="Howarth S."/>
            <person name="Huang C.-H."/>
            <person name="Kieser T."/>
            <person name="Larke L."/>
            <person name="Murphy L.D."/>
            <person name="Oliver K."/>
            <person name="O'Neil S."/>
            <person name="Rabbinowitsch E."/>
            <person name="Rajandream M.A."/>
            <person name="Rutherford K.M."/>
            <person name="Rutter S."/>
            <person name="Seeger K."/>
            <person name="Saunders D."/>
            <person name="Sharp S."/>
            <person name="Squares R."/>
            <person name="Squares S."/>
            <person name="Taylor K."/>
            <person name="Warren T."/>
            <person name="Wietzorrek A."/>
            <person name="Woodward J.R."/>
            <person name="Barrell B.G."/>
            <person name="Parkhill J."/>
            <person name="Hopwood D.A."/>
        </authorList>
    </citation>
    <scope>NUCLEOTIDE SEQUENCE [LARGE SCALE GENOMIC DNA]</scope>
    <source>
        <strain>ATCC BAA-471 / A3(2) / M145</strain>
    </source>
</reference>
<gene>
    <name type="primary">hisB</name>
    <name type="ordered locus">SCO2052</name>
    <name type="ORF">SC4G6.21c</name>
</gene>